<protein>
    <recommendedName>
        <fullName evidence="1">DNA replication and repair protein RecF</fullName>
    </recommendedName>
</protein>
<keyword id="KW-0067">ATP-binding</keyword>
<keyword id="KW-0963">Cytoplasm</keyword>
<keyword id="KW-0227">DNA damage</keyword>
<keyword id="KW-0234">DNA repair</keyword>
<keyword id="KW-0235">DNA replication</keyword>
<keyword id="KW-0238">DNA-binding</keyword>
<keyword id="KW-0547">Nucleotide-binding</keyword>
<keyword id="KW-0742">SOS response</keyword>
<evidence type="ECO:0000255" key="1">
    <source>
        <dbReference type="HAMAP-Rule" id="MF_00365"/>
    </source>
</evidence>
<reference key="1">
    <citation type="submission" date="2007-09" db="EMBL/GenBank/DDBJ databases">
        <title>Complete genome sequence of Rickettsia canadensis.</title>
        <authorList>
            <person name="Madan A."/>
            <person name="Fahey J."/>
            <person name="Helton E."/>
            <person name="Ketteman M."/>
            <person name="Madan A."/>
            <person name="Rodrigues S."/>
            <person name="Sanchez A."/>
            <person name="Whiting M."/>
            <person name="Dasch G."/>
            <person name="Eremeeva M."/>
        </authorList>
    </citation>
    <scope>NUCLEOTIDE SEQUENCE [LARGE SCALE GENOMIC DNA]</scope>
    <source>
        <strain>McKiel</strain>
    </source>
</reference>
<proteinExistence type="inferred from homology"/>
<gene>
    <name evidence="1" type="primary">recF</name>
    <name type="ordered locus">A1E_00125</name>
</gene>
<organism>
    <name type="scientific">Rickettsia canadensis (strain McKiel)</name>
    <dbReference type="NCBI Taxonomy" id="293613"/>
    <lineage>
        <taxon>Bacteria</taxon>
        <taxon>Pseudomonadati</taxon>
        <taxon>Pseudomonadota</taxon>
        <taxon>Alphaproteobacteria</taxon>
        <taxon>Rickettsiales</taxon>
        <taxon>Rickettsiaceae</taxon>
        <taxon>Rickettsieae</taxon>
        <taxon>Rickettsia</taxon>
        <taxon>belli group</taxon>
    </lineage>
</organism>
<accession>A8EX95</accession>
<name>RECF_RICCK</name>
<comment type="function">
    <text evidence="1">The RecF protein is involved in DNA metabolism; it is required for DNA replication and normal SOS inducibility. RecF binds preferentially to single-stranded, linear DNA. It also seems to bind ATP.</text>
</comment>
<comment type="subcellular location">
    <subcellularLocation>
        <location evidence="1">Cytoplasm</location>
    </subcellularLocation>
</comment>
<comment type="similarity">
    <text evidence="1">Belongs to the RecF family.</text>
</comment>
<dbReference type="EMBL" id="CP000409">
    <property type="protein sequence ID" value="ABV72978.1"/>
    <property type="molecule type" value="Genomic_DNA"/>
</dbReference>
<dbReference type="RefSeq" id="WP_012148179.1">
    <property type="nucleotide sequence ID" value="NC_009879.1"/>
</dbReference>
<dbReference type="SMR" id="A8EX95"/>
<dbReference type="STRING" id="293613.A1E_00125"/>
<dbReference type="KEGG" id="rcm:A1E_00125"/>
<dbReference type="eggNOG" id="COG1195">
    <property type="taxonomic scope" value="Bacteria"/>
</dbReference>
<dbReference type="HOGENOM" id="CLU_040267_2_0_5"/>
<dbReference type="Proteomes" id="UP000007056">
    <property type="component" value="Chromosome"/>
</dbReference>
<dbReference type="GO" id="GO:0005737">
    <property type="term" value="C:cytoplasm"/>
    <property type="evidence" value="ECO:0007669"/>
    <property type="project" value="UniProtKB-SubCell"/>
</dbReference>
<dbReference type="GO" id="GO:0005524">
    <property type="term" value="F:ATP binding"/>
    <property type="evidence" value="ECO:0007669"/>
    <property type="project" value="UniProtKB-UniRule"/>
</dbReference>
<dbReference type="GO" id="GO:0003697">
    <property type="term" value="F:single-stranded DNA binding"/>
    <property type="evidence" value="ECO:0007669"/>
    <property type="project" value="UniProtKB-UniRule"/>
</dbReference>
<dbReference type="GO" id="GO:0006260">
    <property type="term" value="P:DNA replication"/>
    <property type="evidence" value="ECO:0007669"/>
    <property type="project" value="UniProtKB-UniRule"/>
</dbReference>
<dbReference type="GO" id="GO:0000731">
    <property type="term" value="P:DNA synthesis involved in DNA repair"/>
    <property type="evidence" value="ECO:0007669"/>
    <property type="project" value="TreeGrafter"/>
</dbReference>
<dbReference type="GO" id="GO:0006302">
    <property type="term" value="P:double-strand break repair"/>
    <property type="evidence" value="ECO:0007669"/>
    <property type="project" value="TreeGrafter"/>
</dbReference>
<dbReference type="GO" id="GO:0009432">
    <property type="term" value="P:SOS response"/>
    <property type="evidence" value="ECO:0007669"/>
    <property type="project" value="UniProtKB-UniRule"/>
</dbReference>
<dbReference type="Gene3D" id="3.40.50.300">
    <property type="entry name" value="P-loop containing nucleotide triphosphate hydrolases"/>
    <property type="match status" value="1"/>
</dbReference>
<dbReference type="Gene3D" id="1.20.1050.90">
    <property type="entry name" value="RecF/RecN/SMC, N-terminal domain"/>
    <property type="match status" value="1"/>
</dbReference>
<dbReference type="HAMAP" id="MF_00365">
    <property type="entry name" value="RecF"/>
    <property type="match status" value="1"/>
</dbReference>
<dbReference type="InterPro" id="IPR001238">
    <property type="entry name" value="DNA-binding_RecF"/>
</dbReference>
<dbReference type="InterPro" id="IPR018078">
    <property type="entry name" value="DNA-binding_RecF_CS"/>
</dbReference>
<dbReference type="InterPro" id="IPR027417">
    <property type="entry name" value="P-loop_NTPase"/>
</dbReference>
<dbReference type="InterPro" id="IPR003395">
    <property type="entry name" value="RecF/RecN/SMC_N"/>
</dbReference>
<dbReference type="InterPro" id="IPR042174">
    <property type="entry name" value="RecF_2"/>
</dbReference>
<dbReference type="NCBIfam" id="TIGR00611">
    <property type="entry name" value="recf"/>
    <property type="match status" value="1"/>
</dbReference>
<dbReference type="PANTHER" id="PTHR32182">
    <property type="entry name" value="DNA REPLICATION AND REPAIR PROTEIN RECF"/>
    <property type="match status" value="1"/>
</dbReference>
<dbReference type="PANTHER" id="PTHR32182:SF0">
    <property type="entry name" value="DNA REPLICATION AND REPAIR PROTEIN RECF"/>
    <property type="match status" value="1"/>
</dbReference>
<dbReference type="Pfam" id="PF02463">
    <property type="entry name" value="SMC_N"/>
    <property type="match status" value="1"/>
</dbReference>
<dbReference type="SUPFAM" id="SSF52540">
    <property type="entry name" value="P-loop containing nucleoside triphosphate hydrolases"/>
    <property type="match status" value="1"/>
</dbReference>
<dbReference type="PROSITE" id="PS00618">
    <property type="entry name" value="RECF_2"/>
    <property type="match status" value="1"/>
</dbReference>
<sequence>MKNIFLHSLILENYRNFKNLELKIDNTPIILIGENGSGKTNILEAISLFYPGRGLRSAKLADICKTSEDHCSIKALLQSKLGLAEFTTQFKLSSNRRITEYNESKIANNELSKFTSMVWLTPQMEGIFTSGKVERRKFLDRIVYNFDPKHAELVGKYEYYMHERNKILAEEIQDDNWLKIIEEKMADISNHIAVNRLKTLEFMQQTINNLENEFPKADLSIDGIVEQKILDGEENIVSVITAELYKTRNKDKLIGRTSFGVHKSDFLVKHKKKNILAKLCSTGEQKAILIAIILAEMNYAIKLTKIAPVLLLDEVFVHLDDKRRDYLTEFFTYLNLQLWITTTNLESIENFASKAQLIKL</sequence>
<feature type="chain" id="PRO_1000121145" description="DNA replication and repair protein RecF">
    <location>
        <begin position="1"/>
        <end position="360"/>
    </location>
</feature>
<feature type="binding site" evidence="1">
    <location>
        <begin position="33"/>
        <end position="40"/>
    </location>
    <ligand>
        <name>ATP</name>
        <dbReference type="ChEBI" id="CHEBI:30616"/>
    </ligand>
</feature>